<reference key="1">
    <citation type="journal article" date="2015" name="Genome Announc.">
        <title>Genome sequence of the AIDS-associated pathogen Penicillium marneffei (ATCC18224) and its near taxonomic relative Talaromyces stipitatus (ATCC10500).</title>
        <authorList>
            <person name="Nierman W.C."/>
            <person name="Fedorova-Abrams N.D."/>
            <person name="Andrianopoulos A."/>
        </authorList>
    </citation>
    <scope>NUCLEOTIDE SEQUENCE [LARGE SCALE GENOMIC DNA]</scope>
    <source>
        <strain>ATCC 10500 / CBS 375.48 / QM 6759 / NRRL 1006</strain>
    </source>
</reference>
<sequence>MTGLVGENFRRDGGVIPATITKNLNKSSGRQRAREKMADKEFFLSLLSSAATKRDAKAYLSRFPSVKKPKPPIPRQNQGAVETQSGKENEKPGVNLGSFYGATRSVLETPVFRQGPAPETETAHAIGLDEALHVALVKLANAQSLDDETIQGVALTLAQLTRLGMASCVVVDPGPMQDETTWRKAAAEQADRLSAAIDACDGGKARRLDSVLVKNKDRDLPKIISRQVLLRPLRNNHIVVVTPVAYSEETCKASSVPSSDAMLALTRELAGLERKHDPDEDPRVTAEIFAALQKEVAVDRLIVLDSVGGIPAFKGPQQSHVFVNMEQEFKDIEAELHEAMASIERFVDPSAESDITEAATKSNPISKFVATEVTPLSTGQQKPLIEANGGLMTSTLKGHIENLRLLQQTLTLLPPSSSAIITTPRDVANSARPHQDVLSVSQVGTRRQKNPLIHNLLTDKPVYSSSLPSERRGQTAPSIAPSTFLKRGMPLTILPDPRITPWSPNSPDGHHLTLDDPRIDLPRLVHLIEDSFNRKLDVQDYLSRVNGRLAGLIIAGEYEGGAILTWETPPDIPEQDRHKPENISRLVPYLDKFAVLKRSQGAGGVADIVFNAMVRTCLPGGVCWRSRMDNPVNKWYFERSRGTWKLNGSNWAMFWTTPRVPEEDPLKFRDYEAVCRSIQPSWADKKAVVD</sequence>
<keyword id="KW-0012">Acyltransferase</keyword>
<keyword id="KW-0028">Amino-acid biosynthesis</keyword>
<keyword id="KW-0496">Mitochondrion</keyword>
<keyword id="KW-1185">Reference proteome</keyword>
<keyword id="KW-0808">Transferase</keyword>
<keyword id="KW-0809">Transit peptide</keyword>
<name>NAGS_TALSN</name>
<gene>
    <name type="primary">arg2</name>
    <name type="ORF">TSTA_038860</name>
</gene>
<protein>
    <recommendedName>
        <fullName>Amino-acid acetyltransferase, mitochondrial</fullName>
        <ecNumber>2.3.1.1</ecNumber>
    </recommendedName>
    <alternativeName>
        <fullName>Arginine-requiring protein 2</fullName>
    </alternativeName>
    <alternativeName>
        <fullName>Glutamate N-acetyltransferase</fullName>
    </alternativeName>
    <alternativeName>
        <fullName>N-acetylglutamate synthase</fullName>
        <shortName>AGS</shortName>
        <shortName>NAGS</shortName>
    </alternativeName>
</protein>
<evidence type="ECO:0000250" key="1"/>
<evidence type="ECO:0000255" key="2"/>
<evidence type="ECO:0000255" key="3">
    <source>
        <dbReference type="PROSITE-ProRule" id="PRU00532"/>
    </source>
</evidence>
<evidence type="ECO:0000256" key="4">
    <source>
        <dbReference type="SAM" id="MobiDB-lite"/>
    </source>
</evidence>
<evidence type="ECO:0000305" key="5"/>
<proteinExistence type="inferred from homology"/>
<organism>
    <name type="scientific">Talaromyces stipitatus (strain ATCC 10500 / CBS 375.48 / QM 6759 / NRRL 1006)</name>
    <name type="common">Penicillium stipitatum</name>
    <dbReference type="NCBI Taxonomy" id="441959"/>
    <lineage>
        <taxon>Eukaryota</taxon>
        <taxon>Fungi</taxon>
        <taxon>Dikarya</taxon>
        <taxon>Ascomycota</taxon>
        <taxon>Pezizomycotina</taxon>
        <taxon>Eurotiomycetes</taxon>
        <taxon>Eurotiomycetidae</taxon>
        <taxon>Eurotiales</taxon>
        <taxon>Trichocomaceae</taxon>
        <taxon>Talaromyces</taxon>
        <taxon>Talaromyces sect. Talaromyces</taxon>
    </lineage>
</organism>
<dbReference type="EC" id="2.3.1.1"/>
<dbReference type="EMBL" id="EQ962654">
    <property type="protein sequence ID" value="EED20681.1"/>
    <property type="molecule type" value="Genomic_DNA"/>
</dbReference>
<dbReference type="RefSeq" id="XP_002481115.1">
    <property type="nucleotide sequence ID" value="XM_002481070.1"/>
</dbReference>
<dbReference type="FunCoup" id="B8M3T8">
    <property type="interactions" value="118"/>
</dbReference>
<dbReference type="STRING" id="441959.B8M3T8"/>
<dbReference type="GeneID" id="8107928"/>
<dbReference type="VEuPathDB" id="FungiDB:TSTA_038860"/>
<dbReference type="eggNOG" id="KOG2436">
    <property type="taxonomic scope" value="Eukaryota"/>
</dbReference>
<dbReference type="HOGENOM" id="CLU_013088_0_0_1"/>
<dbReference type="InParanoid" id="B8M3T8"/>
<dbReference type="OMA" id="NAMVRDC"/>
<dbReference type="OrthoDB" id="5585968at2759"/>
<dbReference type="PhylomeDB" id="B8M3T8"/>
<dbReference type="UniPathway" id="UPA00068">
    <property type="reaction ID" value="UER00106"/>
</dbReference>
<dbReference type="Proteomes" id="UP000001745">
    <property type="component" value="Unassembled WGS sequence"/>
</dbReference>
<dbReference type="GO" id="GO:0005759">
    <property type="term" value="C:mitochondrial matrix"/>
    <property type="evidence" value="ECO:0007669"/>
    <property type="project" value="TreeGrafter"/>
</dbReference>
<dbReference type="GO" id="GO:0004042">
    <property type="term" value="F:L-glutamate N-acetyltransferase activity"/>
    <property type="evidence" value="ECO:0007669"/>
    <property type="project" value="InterPro"/>
</dbReference>
<dbReference type="GO" id="GO:0006526">
    <property type="term" value="P:L-arginine biosynthetic process"/>
    <property type="evidence" value="ECO:0007669"/>
    <property type="project" value="UniProtKB-UniPathway"/>
</dbReference>
<dbReference type="GO" id="GO:0006592">
    <property type="term" value="P:ornithine biosynthetic process"/>
    <property type="evidence" value="ECO:0007669"/>
    <property type="project" value="TreeGrafter"/>
</dbReference>
<dbReference type="FunFam" id="3.40.630.30:FF:000049">
    <property type="entry name" value="Amino-acid acetyltransferase, mitochondrial"/>
    <property type="match status" value="1"/>
</dbReference>
<dbReference type="Gene3D" id="3.40.630.30">
    <property type="match status" value="1"/>
</dbReference>
<dbReference type="Gene3D" id="3.40.1160.10">
    <property type="entry name" value="Acetylglutamate kinase-like"/>
    <property type="match status" value="1"/>
</dbReference>
<dbReference type="InterPro" id="IPR036393">
    <property type="entry name" value="AceGlu_kinase-like_sf"/>
</dbReference>
<dbReference type="InterPro" id="IPR011190">
    <property type="entry name" value="GlcNAc_Synth_fun"/>
</dbReference>
<dbReference type="InterPro" id="IPR006855">
    <property type="entry name" value="Vertebrate-like_GNAT_dom"/>
</dbReference>
<dbReference type="PANTHER" id="PTHR23342:SF4">
    <property type="entry name" value="AMINO-ACID ACETYLTRANSFERASE, MITOCHONDRIAL"/>
    <property type="match status" value="1"/>
</dbReference>
<dbReference type="PANTHER" id="PTHR23342">
    <property type="entry name" value="N-ACETYLGLUTAMATE SYNTHASE"/>
    <property type="match status" value="1"/>
</dbReference>
<dbReference type="Pfam" id="PF04768">
    <property type="entry name" value="NAT"/>
    <property type="match status" value="1"/>
</dbReference>
<dbReference type="PIRSF" id="PIRSF007892">
    <property type="entry name" value="NAGS_fungal"/>
    <property type="match status" value="1"/>
</dbReference>
<dbReference type="PROSITE" id="PS51731">
    <property type="entry name" value="GNAT_NAGS"/>
    <property type="match status" value="1"/>
</dbReference>
<comment type="function">
    <text evidence="1">N-acetylglutamate synthase involved in arginine biosynthesis.</text>
</comment>
<comment type="catalytic activity">
    <reaction>
        <text>L-glutamate + acetyl-CoA = N-acetyl-L-glutamate + CoA + H(+)</text>
        <dbReference type="Rhea" id="RHEA:24292"/>
        <dbReference type="ChEBI" id="CHEBI:15378"/>
        <dbReference type="ChEBI" id="CHEBI:29985"/>
        <dbReference type="ChEBI" id="CHEBI:44337"/>
        <dbReference type="ChEBI" id="CHEBI:57287"/>
        <dbReference type="ChEBI" id="CHEBI:57288"/>
        <dbReference type="EC" id="2.3.1.1"/>
    </reaction>
</comment>
<comment type="pathway">
    <text>Amino-acid biosynthesis; L-arginine biosynthesis; N(2)-acetyl-L-ornithine from L-glutamate: step 1/4.</text>
</comment>
<comment type="subcellular location">
    <subcellularLocation>
        <location evidence="1">Mitochondrion</location>
    </subcellularLocation>
</comment>
<comment type="similarity">
    <text evidence="5">Belongs to the acetyltransferase family.</text>
</comment>
<accession>B8M3T8</accession>
<feature type="transit peptide" description="Mitochondrion" evidence="2">
    <location>
        <begin position="1"/>
        <end status="unknown"/>
    </location>
</feature>
<feature type="chain" id="PRO_0000372581" description="Amino-acid acetyltransferase, mitochondrial">
    <location>
        <begin status="unknown"/>
        <end position="690"/>
    </location>
</feature>
<feature type="domain" description="N-acetyltransferase" evidence="3">
    <location>
        <begin position="508"/>
        <end position="679"/>
    </location>
</feature>
<feature type="region of interest" description="Disordered" evidence="4">
    <location>
        <begin position="62"/>
        <end position="93"/>
    </location>
</feature>
<feature type="compositionally biased region" description="Polar residues" evidence="4">
    <location>
        <begin position="75"/>
        <end position="84"/>
    </location>
</feature>